<protein>
    <recommendedName>
        <fullName evidence="1">Large ribosomal subunit protein bL19</fullName>
    </recommendedName>
    <alternativeName>
        <fullName evidence="2">50S ribosomal protein L19</fullName>
    </alternativeName>
</protein>
<feature type="chain" id="PRO_0000340747" description="Large ribosomal subunit protein bL19">
    <location>
        <begin position="1"/>
        <end position="115"/>
    </location>
</feature>
<name>RL19_STRSV</name>
<organism>
    <name type="scientific">Streptococcus sanguinis (strain SK36)</name>
    <dbReference type="NCBI Taxonomy" id="388919"/>
    <lineage>
        <taxon>Bacteria</taxon>
        <taxon>Bacillati</taxon>
        <taxon>Bacillota</taxon>
        <taxon>Bacilli</taxon>
        <taxon>Lactobacillales</taxon>
        <taxon>Streptococcaceae</taxon>
        <taxon>Streptococcus</taxon>
    </lineage>
</organism>
<gene>
    <name evidence="1" type="primary">rplS</name>
    <name type="ordered locus">SSA_1265</name>
</gene>
<keyword id="KW-1185">Reference proteome</keyword>
<keyword id="KW-0687">Ribonucleoprotein</keyword>
<keyword id="KW-0689">Ribosomal protein</keyword>
<reference key="1">
    <citation type="journal article" date="2007" name="J. Bacteriol.">
        <title>Genome of the opportunistic pathogen Streptococcus sanguinis.</title>
        <authorList>
            <person name="Xu P."/>
            <person name="Alves J.M."/>
            <person name="Kitten T."/>
            <person name="Brown A."/>
            <person name="Chen Z."/>
            <person name="Ozaki L.S."/>
            <person name="Manque P."/>
            <person name="Ge X."/>
            <person name="Serrano M.G."/>
            <person name="Puiu D."/>
            <person name="Hendricks S."/>
            <person name="Wang Y."/>
            <person name="Chaplin M.D."/>
            <person name="Akan D."/>
            <person name="Paik S."/>
            <person name="Peterson D.L."/>
            <person name="Macrina F.L."/>
            <person name="Buck G.A."/>
        </authorList>
    </citation>
    <scope>NUCLEOTIDE SEQUENCE [LARGE SCALE GENOMIC DNA]</scope>
    <source>
        <strain>SK36</strain>
    </source>
</reference>
<sequence length="115" mass="13082">MNPLIQSLTEGQLRTDIPAFRPGDTVRVHAKVVEGTRERIQIFEGVVIARKGAGISETYTVRKISNGIGVERTFPIHTPRVDKIEVVRYGKVRRAKLYYLRALQGKAARIKEIRR</sequence>
<dbReference type="EMBL" id="CP000387">
    <property type="protein sequence ID" value="ABN44667.1"/>
    <property type="status" value="ALT_INIT"/>
    <property type="molecule type" value="Genomic_DNA"/>
</dbReference>
<dbReference type="RefSeq" id="WP_009660455.1">
    <property type="nucleotide sequence ID" value="NZ_CAXTYR010000001.1"/>
</dbReference>
<dbReference type="RefSeq" id="YP_001035217.1">
    <property type="nucleotide sequence ID" value="NC_009009.1"/>
</dbReference>
<dbReference type="SMR" id="A3CNB2"/>
<dbReference type="STRING" id="388919.SSA_1265"/>
<dbReference type="KEGG" id="ssa:SSA_1265"/>
<dbReference type="PATRIC" id="fig|388919.9.peg.1204"/>
<dbReference type="eggNOG" id="COG0335">
    <property type="taxonomic scope" value="Bacteria"/>
</dbReference>
<dbReference type="HOGENOM" id="CLU_103507_2_1_9"/>
<dbReference type="OrthoDB" id="9803541at2"/>
<dbReference type="Proteomes" id="UP000002148">
    <property type="component" value="Chromosome"/>
</dbReference>
<dbReference type="GO" id="GO:0022625">
    <property type="term" value="C:cytosolic large ribosomal subunit"/>
    <property type="evidence" value="ECO:0007669"/>
    <property type="project" value="TreeGrafter"/>
</dbReference>
<dbReference type="GO" id="GO:0003735">
    <property type="term" value="F:structural constituent of ribosome"/>
    <property type="evidence" value="ECO:0007669"/>
    <property type="project" value="InterPro"/>
</dbReference>
<dbReference type="GO" id="GO:0006412">
    <property type="term" value="P:translation"/>
    <property type="evidence" value="ECO:0007669"/>
    <property type="project" value="UniProtKB-UniRule"/>
</dbReference>
<dbReference type="FunFam" id="2.30.30.790:FF:000001">
    <property type="entry name" value="50S ribosomal protein L19"/>
    <property type="match status" value="1"/>
</dbReference>
<dbReference type="Gene3D" id="2.30.30.790">
    <property type="match status" value="1"/>
</dbReference>
<dbReference type="HAMAP" id="MF_00402">
    <property type="entry name" value="Ribosomal_bL19"/>
    <property type="match status" value="1"/>
</dbReference>
<dbReference type="InterPro" id="IPR001857">
    <property type="entry name" value="Ribosomal_bL19"/>
</dbReference>
<dbReference type="InterPro" id="IPR018257">
    <property type="entry name" value="Ribosomal_bL19_CS"/>
</dbReference>
<dbReference type="InterPro" id="IPR038657">
    <property type="entry name" value="Ribosomal_bL19_sf"/>
</dbReference>
<dbReference type="InterPro" id="IPR008991">
    <property type="entry name" value="Translation_prot_SH3-like_sf"/>
</dbReference>
<dbReference type="NCBIfam" id="TIGR01024">
    <property type="entry name" value="rplS_bact"/>
    <property type="match status" value="1"/>
</dbReference>
<dbReference type="PANTHER" id="PTHR15680:SF9">
    <property type="entry name" value="LARGE RIBOSOMAL SUBUNIT PROTEIN BL19M"/>
    <property type="match status" value="1"/>
</dbReference>
<dbReference type="PANTHER" id="PTHR15680">
    <property type="entry name" value="RIBOSOMAL PROTEIN L19"/>
    <property type="match status" value="1"/>
</dbReference>
<dbReference type="Pfam" id="PF01245">
    <property type="entry name" value="Ribosomal_L19"/>
    <property type="match status" value="1"/>
</dbReference>
<dbReference type="PIRSF" id="PIRSF002191">
    <property type="entry name" value="Ribosomal_L19"/>
    <property type="match status" value="1"/>
</dbReference>
<dbReference type="PRINTS" id="PR00061">
    <property type="entry name" value="RIBOSOMALL19"/>
</dbReference>
<dbReference type="SUPFAM" id="SSF50104">
    <property type="entry name" value="Translation proteins SH3-like domain"/>
    <property type="match status" value="1"/>
</dbReference>
<dbReference type="PROSITE" id="PS01015">
    <property type="entry name" value="RIBOSOMAL_L19"/>
    <property type="match status" value="1"/>
</dbReference>
<proteinExistence type="inferred from homology"/>
<evidence type="ECO:0000255" key="1">
    <source>
        <dbReference type="HAMAP-Rule" id="MF_00402"/>
    </source>
</evidence>
<evidence type="ECO:0000305" key="2"/>
<comment type="function">
    <text evidence="1">This protein is located at the 30S-50S ribosomal subunit interface and may play a role in the structure and function of the aminoacyl-tRNA binding site.</text>
</comment>
<comment type="similarity">
    <text evidence="1">Belongs to the bacterial ribosomal protein bL19 family.</text>
</comment>
<comment type="sequence caution" evidence="2">
    <conflict type="erroneous initiation">
        <sequence resource="EMBL-CDS" id="ABN44667"/>
    </conflict>
</comment>
<accession>A3CNB2</accession>